<comment type="function">
    <text evidence="1">One of the primary rRNA binding proteins, it binds directly near the 3'-end of the 23S rRNA, where it nucleates assembly of the 50S subunit.</text>
</comment>
<comment type="subunit">
    <text evidence="1">Part of the 50S ribosomal subunit. Forms a cluster with proteins L14 and L19.</text>
</comment>
<comment type="PTM">
    <text evidence="1">Methylated by PrmB.</text>
</comment>
<comment type="similarity">
    <text evidence="1">Belongs to the universal ribosomal protein uL3 family.</text>
</comment>
<organism>
    <name type="scientific">Saccharophagus degradans (strain 2-40 / ATCC 43961 / DSM 17024)</name>
    <dbReference type="NCBI Taxonomy" id="203122"/>
    <lineage>
        <taxon>Bacteria</taxon>
        <taxon>Pseudomonadati</taxon>
        <taxon>Pseudomonadota</taxon>
        <taxon>Gammaproteobacteria</taxon>
        <taxon>Cellvibrionales</taxon>
        <taxon>Cellvibrionaceae</taxon>
        <taxon>Saccharophagus</taxon>
    </lineage>
</organism>
<protein>
    <recommendedName>
        <fullName evidence="1">Large ribosomal subunit protein uL3</fullName>
    </recommendedName>
    <alternativeName>
        <fullName evidence="2">50S ribosomal protein L3</fullName>
    </alternativeName>
</protein>
<gene>
    <name evidence="1" type="primary">rplC</name>
    <name type="ordered locus">Sde_0960</name>
</gene>
<evidence type="ECO:0000255" key="1">
    <source>
        <dbReference type="HAMAP-Rule" id="MF_01325"/>
    </source>
</evidence>
<evidence type="ECO:0000305" key="2"/>
<reference key="1">
    <citation type="journal article" date="2008" name="PLoS Genet.">
        <title>Complete genome sequence of the complex carbohydrate-degrading marine bacterium, Saccharophagus degradans strain 2-40 T.</title>
        <authorList>
            <person name="Weiner R.M."/>
            <person name="Taylor L.E. II"/>
            <person name="Henrissat B."/>
            <person name="Hauser L."/>
            <person name="Land M."/>
            <person name="Coutinho P.M."/>
            <person name="Rancurel C."/>
            <person name="Saunders E.H."/>
            <person name="Longmire A.G."/>
            <person name="Zhang H."/>
            <person name="Bayer E.A."/>
            <person name="Gilbert H.J."/>
            <person name="Larimer F."/>
            <person name="Zhulin I.B."/>
            <person name="Ekborg N.A."/>
            <person name="Lamed R."/>
            <person name="Richardson P.M."/>
            <person name="Borovok I."/>
            <person name="Hutcheson S."/>
        </authorList>
    </citation>
    <scope>NUCLEOTIDE SEQUENCE [LARGE SCALE GENOMIC DNA]</scope>
    <source>
        <strain>2-40 / ATCC 43961 / DSM 17024</strain>
    </source>
</reference>
<keyword id="KW-0488">Methylation</keyword>
<keyword id="KW-1185">Reference proteome</keyword>
<keyword id="KW-0687">Ribonucleoprotein</keyword>
<keyword id="KW-0689">Ribosomal protein</keyword>
<keyword id="KW-0694">RNA-binding</keyword>
<keyword id="KW-0699">rRNA-binding</keyword>
<accession>Q21M57</accession>
<feature type="chain" id="PRO_0000241405" description="Large ribosomal subunit protein uL3">
    <location>
        <begin position="1"/>
        <end position="214"/>
    </location>
</feature>
<feature type="modified residue" description="N5-methylglutamine" evidence="1">
    <location>
        <position position="151"/>
    </location>
</feature>
<sequence>MTIGIVGRKSGMTRIFTDDGLSVPVTVVEVDPNRITQVKSVETDGYAAVQVTVGSRRASRVSKPEAGHFAKAEVEAGRTVLELRNESGEQFEVGGLLTVEAFEAGQKVDVTGASKGKGFAGVIKRYNFRMQDATHGNSLSHRAPGSIGQCQTPGRVFKGKKMAGHMGAARVTTQNLEVVRVDVERNLLLIKGAVPGAPGGDVIIRPAVKSRNNG</sequence>
<name>RL3_SACD2</name>
<dbReference type="EMBL" id="CP000282">
    <property type="protein sequence ID" value="ABD80222.1"/>
    <property type="molecule type" value="Genomic_DNA"/>
</dbReference>
<dbReference type="RefSeq" id="WP_011467442.1">
    <property type="nucleotide sequence ID" value="NC_007912.1"/>
</dbReference>
<dbReference type="SMR" id="Q21M57"/>
<dbReference type="STRING" id="203122.Sde_0960"/>
<dbReference type="GeneID" id="98612645"/>
<dbReference type="KEGG" id="sde:Sde_0960"/>
<dbReference type="eggNOG" id="COG0087">
    <property type="taxonomic scope" value="Bacteria"/>
</dbReference>
<dbReference type="HOGENOM" id="CLU_044142_4_1_6"/>
<dbReference type="OrthoDB" id="9806135at2"/>
<dbReference type="Proteomes" id="UP000001947">
    <property type="component" value="Chromosome"/>
</dbReference>
<dbReference type="GO" id="GO:0022625">
    <property type="term" value="C:cytosolic large ribosomal subunit"/>
    <property type="evidence" value="ECO:0007669"/>
    <property type="project" value="TreeGrafter"/>
</dbReference>
<dbReference type="GO" id="GO:0019843">
    <property type="term" value="F:rRNA binding"/>
    <property type="evidence" value="ECO:0007669"/>
    <property type="project" value="UniProtKB-UniRule"/>
</dbReference>
<dbReference type="GO" id="GO:0003735">
    <property type="term" value="F:structural constituent of ribosome"/>
    <property type="evidence" value="ECO:0007669"/>
    <property type="project" value="InterPro"/>
</dbReference>
<dbReference type="GO" id="GO:0006412">
    <property type="term" value="P:translation"/>
    <property type="evidence" value="ECO:0007669"/>
    <property type="project" value="UniProtKB-UniRule"/>
</dbReference>
<dbReference type="FunFam" id="2.40.30.10:FF:000004">
    <property type="entry name" value="50S ribosomal protein L3"/>
    <property type="match status" value="1"/>
</dbReference>
<dbReference type="FunFam" id="3.30.160.810:FF:000001">
    <property type="entry name" value="50S ribosomal protein L3"/>
    <property type="match status" value="1"/>
</dbReference>
<dbReference type="Gene3D" id="3.30.160.810">
    <property type="match status" value="1"/>
</dbReference>
<dbReference type="Gene3D" id="2.40.30.10">
    <property type="entry name" value="Translation factors"/>
    <property type="match status" value="1"/>
</dbReference>
<dbReference type="HAMAP" id="MF_01325_B">
    <property type="entry name" value="Ribosomal_uL3_B"/>
    <property type="match status" value="1"/>
</dbReference>
<dbReference type="InterPro" id="IPR000597">
    <property type="entry name" value="Ribosomal_uL3"/>
</dbReference>
<dbReference type="InterPro" id="IPR019927">
    <property type="entry name" value="Ribosomal_uL3_bac/org-type"/>
</dbReference>
<dbReference type="InterPro" id="IPR019926">
    <property type="entry name" value="Ribosomal_uL3_CS"/>
</dbReference>
<dbReference type="InterPro" id="IPR009000">
    <property type="entry name" value="Transl_B-barrel_sf"/>
</dbReference>
<dbReference type="NCBIfam" id="TIGR03625">
    <property type="entry name" value="L3_bact"/>
    <property type="match status" value="1"/>
</dbReference>
<dbReference type="PANTHER" id="PTHR11229">
    <property type="entry name" value="50S RIBOSOMAL PROTEIN L3"/>
    <property type="match status" value="1"/>
</dbReference>
<dbReference type="PANTHER" id="PTHR11229:SF16">
    <property type="entry name" value="LARGE RIBOSOMAL SUBUNIT PROTEIN UL3C"/>
    <property type="match status" value="1"/>
</dbReference>
<dbReference type="Pfam" id="PF00297">
    <property type="entry name" value="Ribosomal_L3"/>
    <property type="match status" value="1"/>
</dbReference>
<dbReference type="SUPFAM" id="SSF50447">
    <property type="entry name" value="Translation proteins"/>
    <property type="match status" value="1"/>
</dbReference>
<dbReference type="PROSITE" id="PS00474">
    <property type="entry name" value="RIBOSOMAL_L3"/>
    <property type="match status" value="1"/>
</dbReference>
<proteinExistence type="inferred from homology"/>